<keyword id="KW-0143">Chaperone</keyword>
<keyword id="KW-0846">Cobalamin</keyword>
<keyword id="KW-0170">Cobalt</keyword>
<keyword id="KW-0342">GTP-binding</keyword>
<keyword id="KW-0378">Hydrolase</keyword>
<keyword id="KW-0413">Isomerase</keyword>
<keyword id="KW-0460">Magnesium</keyword>
<keyword id="KW-0479">Metal-binding</keyword>
<keyword id="KW-0511">Multifunctional enzyme</keyword>
<keyword id="KW-0547">Nucleotide-binding</keyword>
<keyword id="KW-1185">Reference proteome</keyword>
<protein>
    <recommendedName>
        <fullName evidence="3 6">Fused isobutyryl-CoA mutase</fullName>
    </recommendedName>
    <domain>
        <recommendedName>
            <fullName evidence="3 6">Isobutyryl-CoA mutase</fullName>
            <shortName evidence="3 6">ICM</shortName>
            <ecNumber evidence="3 5">5.4.99.13</ecNumber>
        </recommendedName>
    </domain>
    <domain>
        <recommendedName>
            <fullName evidence="3 6">P-loop GTPase</fullName>
            <ecNumber evidence="2 3">3.6.5.-</ecNumber>
        </recommendedName>
        <alternativeName>
            <fullName evidence="3 6">G-protein chaperone</fullName>
        </alternativeName>
    </domain>
</protein>
<accession>Q146L7</accession>
<organism>
    <name type="scientific">Paraburkholderia xenovorans (strain LB400)</name>
    <dbReference type="NCBI Taxonomy" id="266265"/>
    <lineage>
        <taxon>Bacteria</taxon>
        <taxon>Pseudomonadati</taxon>
        <taxon>Pseudomonadota</taxon>
        <taxon>Betaproteobacteria</taxon>
        <taxon>Burkholderiales</taxon>
        <taxon>Burkholderiaceae</taxon>
        <taxon>Paraburkholderia</taxon>
    </lineage>
</organism>
<proteinExistence type="evidence at protein level"/>
<feature type="chain" id="PRO_0000434128" description="Fused isobutyryl-CoA mutase">
    <location>
        <begin position="1"/>
        <end position="1272"/>
    </location>
</feature>
<feature type="domain" description="B12-binding" evidence="3">
    <location>
        <begin position="20"/>
        <end position="158"/>
    </location>
</feature>
<feature type="region of interest" description="GTPase chaperone MeaI" evidence="3">
    <location>
        <begin position="163"/>
        <end position="536"/>
    </location>
</feature>
<feature type="region of interest" description="Disordered" evidence="4">
    <location>
        <begin position="193"/>
        <end position="240"/>
    </location>
</feature>
<feature type="region of interest" description="Linker" evidence="3">
    <location>
        <begin position="537"/>
        <end position="758"/>
    </location>
</feature>
<feature type="region of interest" description="Disordered" evidence="4">
    <location>
        <begin position="614"/>
        <end position="667"/>
    </location>
</feature>
<feature type="compositionally biased region" description="Low complexity" evidence="4">
    <location>
        <begin position="221"/>
        <end position="240"/>
    </location>
</feature>
<feature type="compositionally biased region" description="Low complexity" evidence="4">
    <location>
        <begin position="614"/>
        <end position="631"/>
    </location>
</feature>
<feature type="compositionally biased region" description="Low complexity" evidence="4">
    <location>
        <begin position="639"/>
        <end position="663"/>
    </location>
</feature>
<feature type="binding site" description="axial binding residue" evidence="3">
    <location>
        <position position="33"/>
    </location>
    <ligand>
        <name>adenosylcob(III)alamin</name>
        <dbReference type="ChEBI" id="CHEBI:18408"/>
    </ligand>
    <ligandPart>
        <name>Co</name>
        <dbReference type="ChEBI" id="CHEBI:27638"/>
    </ligandPart>
</feature>
<feature type="binding site" evidence="3">
    <location>
        <begin position="334"/>
        <end position="339"/>
    </location>
    <ligand>
        <name>GTP</name>
        <dbReference type="ChEBI" id="CHEBI:37565"/>
    </ligand>
</feature>
<feature type="binding site" evidence="3">
    <location>
        <position position="338"/>
    </location>
    <ligand>
        <name>Mg(2+)</name>
        <dbReference type="ChEBI" id="CHEBI:18420"/>
        <label>1</label>
        <note>catalytic</note>
    </ligand>
</feature>
<feature type="binding site" evidence="3">
    <location>
        <position position="363"/>
    </location>
    <ligand>
        <name>Mg(2+)</name>
        <dbReference type="ChEBI" id="CHEBI:18420"/>
        <label>2</label>
    </ligand>
</feature>
<feature type="binding site" evidence="3">
    <location>
        <position position="364"/>
    </location>
    <ligand>
        <name>Mg(2+)</name>
        <dbReference type="ChEBI" id="CHEBI:18420"/>
        <label>2</label>
    </ligand>
</feature>
<feature type="binding site" evidence="3">
    <location>
        <position position="377"/>
    </location>
    <ligand>
        <name>Mg(2+)</name>
        <dbReference type="ChEBI" id="CHEBI:18420"/>
        <label>1</label>
        <note>catalytic</note>
    </ligand>
</feature>
<feature type="binding site" evidence="3">
    <location>
        <position position="377"/>
    </location>
    <ligand>
        <name>Mg(2+)</name>
        <dbReference type="ChEBI" id="CHEBI:18420"/>
        <label>2</label>
    </ligand>
</feature>
<feature type="binding site" evidence="3">
    <location>
        <position position="380"/>
    </location>
    <ligand>
        <name>GTP</name>
        <dbReference type="ChEBI" id="CHEBI:37565"/>
    </ligand>
</feature>
<feature type="binding site" evidence="3">
    <location>
        <position position="429"/>
    </location>
    <ligand>
        <name>Mg(2+)</name>
        <dbReference type="ChEBI" id="CHEBI:18420"/>
        <label>1</label>
        <note>catalytic</note>
    </ligand>
</feature>
<feature type="binding site" evidence="3">
    <location>
        <position position="429"/>
    </location>
    <ligand>
        <name>Mg(2+)</name>
        <dbReference type="ChEBI" id="CHEBI:18420"/>
        <label>2</label>
    </ligand>
</feature>
<feature type="binding site" evidence="3">
    <location>
        <position position="430"/>
    </location>
    <ligand>
        <name>Mg(2+)</name>
        <dbReference type="ChEBI" id="CHEBI:18420"/>
        <label>2</label>
    </ligand>
</feature>
<feature type="binding site" evidence="3">
    <location>
        <begin position="476"/>
        <end position="479"/>
    </location>
    <ligand>
        <name>GTP</name>
        <dbReference type="ChEBI" id="CHEBI:37565"/>
    </ligand>
</feature>
<feature type="binding site" evidence="3">
    <location>
        <position position="766"/>
    </location>
    <ligand>
        <name>substrate</name>
    </ligand>
</feature>
<feature type="binding site" evidence="3">
    <location>
        <position position="801"/>
    </location>
    <ligand>
        <name>substrate</name>
    </ligand>
</feature>
<feature type="binding site" evidence="3">
    <location>
        <position position="907"/>
    </location>
    <ligand>
        <name>substrate</name>
    </ligand>
</feature>
<feature type="binding site" evidence="3">
    <location>
        <position position="951"/>
    </location>
    <ligand>
        <name>substrate</name>
    </ligand>
</feature>
<feature type="binding site" evidence="3">
    <location>
        <position position="1000"/>
    </location>
    <ligand>
        <name>substrate</name>
    </ligand>
</feature>
<feature type="binding site" evidence="3">
    <location>
        <position position="1035"/>
    </location>
    <ligand>
        <name>substrate</name>
    </ligand>
</feature>
<feature type="binding site" evidence="3">
    <location>
        <position position="1040"/>
    </location>
    <ligand>
        <name>substrate</name>
    </ligand>
</feature>
<feature type="binding site" evidence="3">
    <location>
        <position position="1152"/>
    </location>
    <ligand>
        <name>GTP</name>
        <dbReference type="ChEBI" id="CHEBI:37565"/>
    </ligand>
</feature>
<feature type="binding site" evidence="3">
    <location>
        <position position="1271"/>
    </location>
    <ligand>
        <name>GTP</name>
        <dbReference type="ChEBI" id="CHEBI:37565"/>
    </ligand>
</feature>
<name>ICMF_PARXL</name>
<dbReference type="EC" id="5.4.99.13" evidence="3 5"/>
<dbReference type="EC" id="3.6.5.-" evidence="2 3"/>
<dbReference type="EMBL" id="CP000270">
    <property type="protein sequence ID" value="ABE28722.1"/>
    <property type="molecule type" value="Genomic_DNA"/>
</dbReference>
<dbReference type="RefSeq" id="WP_011486567.1">
    <property type="nucleotide sequence ID" value="NC_007951.1"/>
</dbReference>
<dbReference type="SMR" id="Q146L7"/>
<dbReference type="STRING" id="266265.Bxe_A4277"/>
<dbReference type="KEGG" id="bxb:DR64_1955"/>
<dbReference type="KEGG" id="bxe:Bxe_A4277"/>
<dbReference type="PATRIC" id="fig|266265.5.peg.194"/>
<dbReference type="eggNOG" id="COG1703">
    <property type="taxonomic scope" value="Bacteria"/>
</dbReference>
<dbReference type="eggNOG" id="COG1884">
    <property type="taxonomic scope" value="Bacteria"/>
</dbReference>
<dbReference type="eggNOG" id="COG2185">
    <property type="taxonomic scope" value="Bacteria"/>
</dbReference>
<dbReference type="OrthoDB" id="9762378at2"/>
<dbReference type="Proteomes" id="UP000001817">
    <property type="component" value="Chromosome 1"/>
</dbReference>
<dbReference type="GO" id="GO:0031419">
    <property type="term" value="F:cobalamin binding"/>
    <property type="evidence" value="ECO:0007669"/>
    <property type="project" value="UniProtKB-UniRule"/>
</dbReference>
<dbReference type="GO" id="GO:0005525">
    <property type="term" value="F:GTP binding"/>
    <property type="evidence" value="ECO:0007669"/>
    <property type="project" value="UniProtKB-UniRule"/>
</dbReference>
<dbReference type="GO" id="GO:0003924">
    <property type="term" value="F:GTPase activity"/>
    <property type="evidence" value="ECO:0007669"/>
    <property type="project" value="UniProtKB-UniRule"/>
</dbReference>
<dbReference type="GO" id="GO:0047727">
    <property type="term" value="F:isobutyryl-CoA mutase activity"/>
    <property type="evidence" value="ECO:0000314"/>
    <property type="project" value="UniProtKB"/>
</dbReference>
<dbReference type="GO" id="GO:0000287">
    <property type="term" value="F:magnesium ion binding"/>
    <property type="evidence" value="ECO:0007669"/>
    <property type="project" value="UniProtKB-UniRule"/>
</dbReference>
<dbReference type="GO" id="GO:0004494">
    <property type="term" value="F:methylmalonyl-CoA mutase activity"/>
    <property type="evidence" value="ECO:0007669"/>
    <property type="project" value="InterPro"/>
</dbReference>
<dbReference type="GO" id="GO:0034784">
    <property type="term" value="F:pivalyl-CoA mutase activity"/>
    <property type="evidence" value="ECO:0007669"/>
    <property type="project" value="InterPro"/>
</dbReference>
<dbReference type="GO" id="GO:0006637">
    <property type="term" value="P:acyl-CoA metabolic process"/>
    <property type="evidence" value="ECO:0000314"/>
    <property type="project" value="UniProtKB"/>
</dbReference>
<dbReference type="CDD" id="cd02071">
    <property type="entry name" value="MM_CoA_mut_B12_BD"/>
    <property type="match status" value="1"/>
</dbReference>
<dbReference type="FunFam" id="3.20.20.240:FF:000003">
    <property type="entry name" value="Fused isobutyryl-CoA mutase"/>
    <property type="match status" value="1"/>
</dbReference>
<dbReference type="FunFam" id="3.40.50.280:FF:000005">
    <property type="entry name" value="Fused isobutyryl-CoA mutase"/>
    <property type="match status" value="1"/>
</dbReference>
<dbReference type="FunFam" id="3.40.50.300:FF:001512">
    <property type="entry name" value="Fused isobutyryl-CoA mutase"/>
    <property type="match status" value="1"/>
</dbReference>
<dbReference type="Gene3D" id="3.40.50.280">
    <property type="entry name" value="Cobalamin-binding domain"/>
    <property type="match status" value="1"/>
</dbReference>
<dbReference type="Gene3D" id="3.20.20.240">
    <property type="entry name" value="Methylmalonyl-CoA mutase"/>
    <property type="match status" value="1"/>
</dbReference>
<dbReference type="Gene3D" id="3.40.50.300">
    <property type="entry name" value="P-loop containing nucleotide triphosphate hydrolases"/>
    <property type="match status" value="1"/>
</dbReference>
<dbReference type="HAMAP" id="MF_02050">
    <property type="entry name" value="IcmF"/>
    <property type="match status" value="1"/>
</dbReference>
<dbReference type="InterPro" id="IPR016176">
    <property type="entry name" value="Cbl-dep_enz_cat"/>
</dbReference>
<dbReference type="InterPro" id="IPR006158">
    <property type="entry name" value="Cobalamin-bd"/>
</dbReference>
<dbReference type="InterPro" id="IPR036724">
    <property type="entry name" value="Cobalamin-bd_sf"/>
</dbReference>
<dbReference type="InterPro" id="IPR052040">
    <property type="entry name" value="GTPase/Isobutyryl-CoA_mutase"/>
</dbReference>
<dbReference type="InterPro" id="IPR033669">
    <property type="entry name" value="IcmF"/>
</dbReference>
<dbReference type="InterPro" id="IPR006099">
    <property type="entry name" value="MeMalonylCoA_mutase_a/b_cat"/>
</dbReference>
<dbReference type="InterPro" id="IPR006098">
    <property type="entry name" value="MMCoA_mutase_a_cat"/>
</dbReference>
<dbReference type="InterPro" id="IPR027417">
    <property type="entry name" value="P-loop_NTPase"/>
</dbReference>
<dbReference type="NCBIfam" id="TIGR00641">
    <property type="entry name" value="acid_CoA_mut_N"/>
    <property type="match status" value="1"/>
</dbReference>
<dbReference type="PANTHER" id="PTHR43087:SF1">
    <property type="entry name" value="LAO_AO TRANSPORT SYSTEM ATPASE"/>
    <property type="match status" value="1"/>
</dbReference>
<dbReference type="PANTHER" id="PTHR43087">
    <property type="entry name" value="LYSINE/ARGININE/ORNITHINE TRANSPORT SYSTEM KINASE"/>
    <property type="match status" value="1"/>
</dbReference>
<dbReference type="Pfam" id="PF02310">
    <property type="entry name" value="B12-binding"/>
    <property type="match status" value="1"/>
</dbReference>
<dbReference type="Pfam" id="PF03308">
    <property type="entry name" value="MeaB"/>
    <property type="match status" value="1"/>
</dbReference>
<dbReference type="Pfam" id="PF01642">
    <property type="entry name" value="MM_CoA_mutase"/>
    <property type="match status" value="1"/>
</dbReference>
<dbReference type="SUPFAM" id="SSF52242">
    <property type="entry name" value="Cobalamin (vitamin B12)-binding domain"/>
    <property type="match status" value="1"/>
</dbReference>
<dbReference type="SUPFAM" id="SSF51703">
    <property type="entry name" value="Cobalamin (vitamin B12)-dependent enzymes"/>
    <property type="match status" value="1"/>
</dbReference>
<dbReference type="SUPFAM" id="SSF52540">
    <property type="entry name" value="P-loop containing nucleoside triphosphate hydrolases"/>
    <property type="match status" value="1"/>
</dbReference>
<dbReference type="PROSITE" id="PS51332">
    <property type="entry name" value="B12_BINDING"/>
    <property type="match status" value="1"/>
</dbReference>
<gene>
    <name evidence="3 6" type="primary">icmF</name>
    <name evidence="7" type="ordered locus">Bxeno_A0184</name>
    <name evidence="8" type="ORF">Bxe_A4277</name>
</gene>
<sequence length="1272" mass="137407">MTDLSTPQRAGSHKLPAGRRLRFVTAAALFDGHDASINIMRRILQASGVEVIHLGHNRSVDEVATAALHEDADGVAVSSYQGGHNEYFRYLVDLLRARGGERIKVFGGGGGVIVPEEIAGLERYGVEKIYSPQDGQRLGLQGMIDDMIARCAEGARAAAATGESQVGAWAAEFSEHGLPRFDSRDDVGVDRQGAVARNPSSEASRVAAAGRGDHLDRGVRAASTADTADTANTANTANTANTGSVADAADAADAADAADAADAASTASTASTASTASTASTAGIPDPASLVFRRLAQLISAFETAAIDVNTRDKLSALAEVTAIPLLGITGTGGAGKSSLTDELIRRFRLDYGDALTIAVLAIDPSRRKSGGALLGDRIRMNAIGDWGGGARVYMRSMATREASSEISDSLPDALMLCKAAGFDLIVVETSGIGQGNAAIVPFVDESLYVMTPEFGAASQLEKIDMLDFASFVAINKFDRKGARDALRDVAKQVQRNRADFAKSPEAMPVFGTIASRFNDDGVTALYRHVAEALRKHGLRSGGGRLAAPEDLRFSSGRNAIVPPARVRYLADIAQTIHAYRERADAQARLARERWQLIEARRMLVETGEAARSTVATSASPGASASSKANACTSTSSKANASPGANTTANSNASATSGTATPTDALNPTLSQLDTLITQRTASLGERERILLDTWPEIVAAYSGTEHIVRVRDREIRTALTVATLSGSEVRKVSLPKFVDHGEILRWLMLDNLPGYFPFTAGVFPFRRENEDPTRMFAGEGDPQRTNRRFKLLSEGMPAKRLSTAFDSVTLYGEEPHERPDIYGKVGNSGVSVATLDDMKTLYDGFDLCAPETSVSMTINGPAPTILAMFFNVAIDQQIARTTQRQGRPLTEDELAATRRTALENVRGTVQADILKEDQGQNTCIFSTEFSLKVMGDIQAYFVEHGVRNFYSVSISGYHIAEAGANPISQLAYTLANGFTYVEAYLARGMSIDDFAPNLSFFFSNGMDPEYTVLGRVARRIWAVAMRERYGANERSQKLKYHVQTSGRSLHAQEIDFNDIRTTLQALIAIYDNCNSLHTNAFDEAITTPTEESVRRAVAIQLIINREWGLAKNQNPNQGSFVIEELTDLVEEAVLAEFDRLTERGGVLGAMETGYQRGRIQDESMLYEHRKHDGSYPIVGVNTFLSAHPHEAPQPIALARSTDDEKQSQLQRLRAFQAQHRDAAPAALERLKRAVIDDENVFAVLMDVVRVCSLGQITHALFEVGGQYRRNM</sequence>
<comment type="function">
    <text evidence="1 5">Catalyzes the reversible interconversion of isobutyryl-CoA and n-butyryl-CoA, using radical chemistry (PubMed:19864421). Also exhibits GTPase activity, associated with its G-protein domain (MeaI) that functions as a chaperone that assists cofactor delivery and proper holo-enzyme assembly (By similarity). Does not exhibit methylmalonyl-CoA mutase (MCM) activity (PubMed:19864421).</text>
</comment>
<comment type="catalytic activity">
    <reaction evidence="3 5">
        <text>2-methylpropanoyl-CoA = butanoyl-CoA</text>
        <dbReference type="Rhea" id="RHEA:13141"/>
        <dbReference type="ChEBI" id="CHEBI:57338"/>
        <dbReference type="ChEBI" id="CHEBI:57371"/>
        <dbReference type="EC" id="5.4.99.13"/>
    </reaction>
</comment>
<comment type="catalytic activity">
    <reaction evidence="3">
        <text>GTP + H2O = GDP + phosphate + H(+)</text>
        <dbReference type="Rhea" id="RHEA:19669"/>
        <dbReference type="ChEBI" id="CHEBI:15377"/>
        <dbReference type="ChEBI" id="CHEBI:15378"/>
        <dbReference type="ChEBI" id="CHEBI:37565"/>
        <dbReference type="ChEBI" id="CHEBI:43474"/>
        <dbReference type="ChEBI" id="CHEBI:58189"/>
    </reaction>
</comment>
<comment type="cofactor">
    <cofactor evidence="3">
        <name>adenosylcob(III)alamin</name>
        <dbReference type="ChEBI" id="CHEBI:18408"/>
    </cofactor>
</comment>
<comment type="cofactor">
    <cofactor evidence="3">
        <name>Mg(2+)</name>
        <dbReference type="ChEBI" id="CHEBI:18420"/>
    </cofactor>
</comment>
<comment type="subunit">
    <text evidence="3">Homodimer.</text>
</comment>
<comment type="domain">
    <text evidence="3 5">Is composed of four functional domains: the N-terminal 5'-deoxyadenosylcobalamin binding region that is homologous to the small subunit of ICM (IcmB), a middle P-loop GTPase domain (MeaI) that likely acts as a chaperone for ICM, a structured linker region involved in dimer formation, and a C-terminal part that is homologous to the large substrate-binding subunit of ICM (IcmA).</text>
</comment>
<comment type="similarity">
    <text evidence="3 7">Belongs to the IcmF family.</text>
</comment>
<evidence type="ECO:0000250" key="1">
    <source>
        <dbReference type="UniProtKB" id="Q1LRY0"/>
    </source>
</evidence>
<evidence type="ECO:0000250" key="2">
    <source>
        <dbReference type="UniProtKB" id="Q5KUG0"/>
    </source>
</evidence>
<evidence type="ECO:0000255" key="3">
    <source>
        <dbReference type="HAMAP-Rule" id="MF_02050"/>
    </source>
</evidence>
<evidence type="ECO:0000256" key="4">
    <source>
        <dbReference type="SAM" id="MobiDB-lite"/>
    </source>
</evidence>
<evidence type="ECO:0000269" key="5">
    <source>
    </source>
</evidence>
<evidence type="ECO:0000303" key="6">
    <source>
    </source>
</evidence>
<evidence type="ECO:0000305" key="7"/>
<evidence type="ECO:0000312" key="8">
    <source>
        <dbReference type="EMBL" id="ABE28722.1"/>
    </source>
</evidence>
<reference key="1">
    <citation type="journal article" date="2006" name="Proc. Natl. Acad. Sci. U.S.A.">
        <title>Burkholderia xenovorans LB400 harbors a multi-replicon, 9.73-Mbp genome shaped for versatility.</title>
        <authorList>
            <person name="Chain P.S.G."/>
            <person name="Denef V.J."/>
            <person name="Konstantinidis K.T."/>
            <person name="Vergez L.M."/>
            <person name="Agullo L."/>
            <person name="Reyes V.L."/>
            <person name="Hauser L."/>
            <person name="Cordova M."/>
            <person name="Gomez L."/>
            <person name="Gonzalez M."/>
            <person name="Land M."/>
            <person name="Lao V."/>
            <person name="Larimer F."/>
            <person name="LiPuma J.J."/>
            <person name="Mahenthiralingam E."/>
            <person name="Malfatti S.A."/>
            <person name="Marx C.J."/>
            <person name="Parnell J.J."/>
            <person name="Ramette A."/>
            <person name="Richardson P."/>
            <person name="Seeger M."/>
            <person name="Smith D."/>
            <person name="Spilker T."/>
            <person name="Sul W.J."/>
            <person name="Tsoi T.V."/>
            <person name="Ulrich L.E."/>
            <person name="Zhulin I.B."/>
            <person name="Tiedje J.M."/>
        </authorList>
    </citation>
    <scope>NUCLEOTIDE SEQUENCE [LARGE SCALE GENOMIC DNA]</scope>
    <source>
        <strain>LB400</strain>
    </source>
</reference>
<reference key="2">
    <citation type="journal article" date="2010" name="J. Biol. Chem.">
        <title>IcmF is a fusion between the radical B12 enzyme isobutyryl-CoA mutase and its G-protein chaperone.</title>
        <authorList>
            <person name="Cracan V."/>
            <person name="Padovani D."/>
            <person name="Banerjee R."/>
        </authorList>
    </citation>
    <scope>FUNCTION</scope>
    <scope>CATALYTIC ACTIVITY</scope>
    <scope>DOMAIN</scope>
</reference>